<feature type="chain" id="PRO_0000104339" description="Large ribosomal subunit protein uL11">
    <location>
        <begin position="1"/>
        <end position="141"/>
    </location>
</feature>
<sequence length="141" mass="14668">MAKKITAVIKLALQAGKANPAPPVGPALGQHGVNIMAFCKEYNARTQDKAGFVIPVEISVFEDRSFTFITKTPPASVLITKAAGIAKGSGDSAKGQAGSINRAQLEEIAKTKLPDLNCNNIESAMKVIAGTARNMGVSVSD</sequence>
<comment type="function">
    <text evidence="1">Forms part of the ribosomal stalk which helps the ribosome interact with GTP-bound translation factors.</text>
</comment>
<comment type="subunit">
    <text evidence="1">Part of the ribosomal stalk of the 50S ribosomal subunit. Interacts with L10 and the large rRNA to form the base of the stalk. L10 forms an elongated spine to which L12 dimers bind in a sequential fashion forming a multimeric L10(L12)X complex.</text>
</comment>
<comment type="PTM">
    <text evidence="1">One or more lysine residues are methylated.</text>
</comment>
<comment type="similarity">
    <text evidence="1">Belongs to the universal ribosomal protein uL11 family.</text>
</comment>
<organism>
    <name type="scientific">Prochlorococcus marinus (strain SARG / CCMP1375 / SS120)</name>
    <dbReference type="NCBI Taxonomy" id="167539"/>
    <lineage>
        <taxon>Bacteria</taxon>
        <taxon>Bacillati</taxon>
        <taxon>Cyanobacteriota</taxon>
        <taxon>Cyanophyceae</taxon>
        <taxon>Synechococcales</taxon>
        <taxon>Prochlorococcaceae</taxon>
        <taxon>Prochlorococcus</taxon>
    </lineage>
</organism>
<accession>Q7VDY5</accession>
<name>RL11_PROMA</name>
<evidence type="ECO:0000255" key="1">
    <source>
        <dbReference type="HAMAP-Rule" id="MF_00736"/>
    </source>
</evidence>
<evidence type="ECO:0000305" key="2"/>
<keyword id="KW-0488">Methylation</keyword>
<keyword id="KW-1185">Reference proteome</keyword>
<keyword id="KW-0687">Ribonucleoprotein</keyword>
<keyword id="KW-0689">Ribosomal protein</keyword>
<keyword id="KW-0694">RNA-binding</keyword>
<keyword id="KW-0699">rRNA-binding</keyword>
<dbReference type="EMBL" id="AE017126">
    <property type="protein sequence ID" value="AAP99276.1"/>
    <property type="molecule type" value="Genomic_DNA"/>
</dbReference>
<dbReference type="RefSeq" id="NP_874624.1">
    <property type="nucleotide sequence ID" value="NC_005042.1"/>
</dbReference>
<dbReference type="RefSeq" id="WP_011124385.1">
    <property type="nucleotide sequence ID" value="NC_005042.1"/>
</dbReference>
<dbReference type="SMR" id="Q7VDY5"/>
<dbReference type="STRING" id="167539.Pro_0230"/>
<dbReference type="EnsemblBacteria" id="AAP99276">
    <property type="protein sequence ID" value="AAP99276"/>
    <property type="gene ID" value="Pro_0230"/>
</dbReference>
<dbReference type="KEGG" id="pma:Pro_0230"/>
<dbReference type="PATRIC" id="fig|167539.5.peg.237"/>
<dbReference type="eggNOG" id="COG0080">
    <property type="taxonomic scope" value="Bacteria"/>
</dbReference>
<dbReference type="HOGENOM" id="CLU_074237_2_2_3"/>
<dbReference type="OrthoDB" id="9802408at2"/>
<dbReference type="Proteomes" id="UP000001420">
    <property type="component" value="Chromosome"/>
</dbReference>
<dbReference type="GO" id="GO:0022625">
    <property type="term" value="C:cytosolic large ribosomal subunit"/>
    <property type="evidence" value="ECO:0007669"/>
    <property type="project" value="TreeGrafter"/>
</dbReference>
<dbReference type="GO" id="GO:0070180">
    <property type="term" value="F:large ribosomal subunit rRNA binding"/>
    <property type="evidence" value="ECO:0007669"/>
    <property type="project" value="UniProtKB-UniRule"/>
</dbReference>
<dbReference type="GO" id="GO:0003735">
    <property type="term" value="F:structural constituent of ribosome"/>
    <property type="evidence" value="ECO:0007669"/>
    <property type="project" value="InterPro"/>
</dbReference>
<dbReference type="GO" id="GO:0006412">
    <property type="term" value="P:translation"/>
    <property type="evidence" value="ECO:0007669"/>
    <property type="project" value="UniProtKB-UniRule"/>
</dbReference>
<dbReference type="CDD" id="cd00349">
    <property type="entry name" value="Ribosomal_L11"/>
    <property type="match status" value="1"/>
</dbReference>
<dbReference type="FunFam" id="1.10.10.250:FF:000001">
    <property type="entry name" value="50S ribosomal protein L11"/>
    <property type="match status" value="1"/>
</dbReference>
<dbReference type="FunFam" id="3.30.1550.10:FF:000001">
    <property type="entry name" value="50S ribosomal protein L11"/>
    <property type="match status" value="1"/>
</dbReference>
<dbReference type="Gene3D" id="1.10.10.250">
    <property type="entry name" value="Ribosomal protein L11, C-terminal domain"/>
    <property type="match status" value="1"/>
</dbReference>
<dbReference type="Gene3D" id="3.30.1550.10">
    <property type="entry name" value="Ribosomal protein L11/L12, N-terminal domain"/>
    <property type="match status" value="1"/>
</dbReference>
<dbReference type="HAMAP" id="MF_00736">
    <property type="entry name" value="Ribosomal_uL11"/>
    <property type="match status" value="1"/>
</dbReference>
<dbReference type="InterPro" id="IPR000911">
    <property type="entry name" value="Ribosomal_uL11"/>
</dbReference>
<dbReference type="InterPro" id="IPR006519">
    <property type="entry name" value="Ribosomal_uL11_bac-typ"/>
</dbReference>
<dbReference type="InterPro" id="IPR020783">
    <property type="entry name" value="Ribosomal_uL11_C"/>
</dbReference>
<dbReference type="InterPro" id="IPR036769">
    <property type="entry name" value="Ribosomal_uL11_C_sf"/>
</dbReference>
<dbReference type="InterPro" id="IPR020785">
    <property type="entry name" value="Ribosomal_uL11_CS"/>
</dbReference>
<dbReference type="InterPro" id="IPR020784">
    <property type="entry name" value="Ribosomal_uL11_N"/>
</dbReference>
<dbReference type="InterPro" id="IPR036796">
    <property type="entry name" value="Ribosomal_uL11_N_sf"/>
</dbReference>
<dbReference type="NCBIfam" id="TIGR01632">
    <property type="entry name" value="L11_bact"/>
    <property type="match status" value="1"/>
</dbReference>
<dbReference type="PANTHER" id="PTHR11661">
    <property type="entry name" value="60S RIBOSOMAL PROTEIN L12"/>
    <property type="match status" value="1"/>
</dbReference>
<dbReference type="PANTHER" id="PTHR11661:SF1">
    <property type="entry name" value="LARGE RIBOSOMAL SUBUNIT PROTEIN UL11M"/>
    <property type="match status" value="1"/>
</dbReference>
<dbReference type="Pfam" id="PF00298">
    <property type="entry name" value="Ribosomal_L11"/>
    <property type="match status" value="1"/>
</dbReference>
<dbReference type="Pfam" id="PF03946">
    <property type="entry name" value="Ribosomal_L11_N"/>
    <property type="match status" value="1"/>
</dbReference>
<dbReference type="SMART" id="SM00649">
    <property type="entry name" value="RL11"/>
    <property type="match status" value="1"/>
</dbReference>
<dbReference type="SUPFAM" id="SSF54747">
    <property type="entry name" value="Ribosomal L11/L12e N-terminal domain"/>
    <property type="match status" value="1"/>
</dbReference>
<dbReference type="SUPFAM" id="SSF46906">
    <property type="entry name" value="Ribosomal protein L11, C-terminal domain"/>
    <property type="match status" value="1"/>
</dbReference>
<dbReference type="PROSITE" id="PS00359">
    <property type="entry name" value="RIBOSOMAL_L11"/>
    <property type="match status" value="1"/>
</dbReference>
<reference key="1">
    <citation type="journal article" date="2003" name="Proc. Natl. Acad. Sci. U.S.A.">
        <title>Genome sequence of the cyanobacterium Prochlorococcus marinus SS120, a nearly minimal oxyphototrophic genome.</title>
        <authorList>
            <person name="Dufresne A."/>
            <person name="Salanoubat M."/>
            <person name="Partensky F."/>
            <person name="Artiguenave F."/>
            <person name="Axmann I.M."/>
            <person name="Barbe V."/>
            <person name="Duprat S."/>
            <person name="Galperin M.Y."/>
            <person name="Koonin E.V."/>
            <person name="Le Gall F."/>
            <person name="Makarova K.S."/>
            <person name="Ostrowski M."/>
            <person name="Oztas S."/>
            <person name="Robert C."/>
            <person name="Rogozin I.B."/>
            <person name="Scanlan D.J."/>
            <person name="Tandeau de Marsac N."/>
            <person name="Weissenbach J."/>
            <person name="Wincker P."/>
            <person name="Wolf Y.I."/>
            <person name="Hess W.R."/>
        </authorList>
    </citation>
    <scope>NUCLEOTIDE SEQUENCE [LARGE SCALE GENOMIC DNA]</scope>
    <source>
        <strain>SARG / CCMP1375 / SS120</strain>
    </source>
</reference>
<gene>
    <name evidence="1" type="primary">rplK</name>
    <name evidence="1" type="synonym">rpl11</name>
    <name type="ordered locus">Pro_0230</name>
</gene>
<protein>
    <recommendedName>
        <fullName evidence="1">Large ribosomal subunit protein uL11</fullName>
    </recommendedName>
    <alternativeName>
        <fullName evidence="2">50S ribosomal protein L11</fullName>
    </alternativeName>
</protein>
<proteinExistence type="inferred from homology"/>